<accession>P0DTH6</accession>
<evidence type="ECO:0000255" key="1"/>
<evidence type="ECO:0000305" key="2"/>
<name>148R_ASFB7</name>
<protein>
    <recommendedName>
        <fullName evidence="2">Uncharacterized membrane protein EP148R</fullName>
    </recommendedName>
</protein>
<keyword id="KW-1043">Host membrane</keyword>
<keyword id="KW-0472">Membrane</keyword>
<keyword id="KW-1185">Reference proteome</keyword>
<keyword id="KW-0812">Transmembrane</keyword>
<keyword id="KW-1133">Transmembrane helix</keyword>
<gene>
    <name evidence="2" type="ORF">EP148R</name>
</gene>
<proteinExistence type="predicted"/>
<organism>
    <name type="scientific">African swine fever virus (strain Badajoz 1971 Vero-adapted)</name>
    <name type="common">Ba71V</name>
    <name type="synonym">ASFV</name>
    <dbReference type="NCBI Taxonomy" id="10498"/>
    <lineage>
        <taxon>Viruses</taxon>
        <taxon>Varidnaviria</taxon>
        <taxon>Bamfordvirae</taxon>
        <taxon>Nucleocytoviricota</taxon>
        <taxon>Pokkesviricetes</taxon>
        <taxon>Asfuvirales</taxon>
        <taxon>Asfarviridae</taxon>
        <taxon>Asfivirus</taxon>
        <taxon>African swine fever virus</taxon>
    </lineage>
</organism>
<dbReference type="EMBL" id="U18466">
    <property type="status" value="NOT_ANNOTATED_CDS"/>
    <property type="molecule type" value="Genomic_DNA"/>
</dbReference>
<dbReference type="Proteomes" id="UP000000624">
    <property type="component" value="Segment"/>
</dbReference>
<dbReference type="GO" id="GO:0033644">
    <property type="term" value="C:host cell membrane"/>
    <property type="evidence" value="ECO:0007669"/>
    <property type="project" value="UniProtKB-SubCell"/>
</dbReference>
<dbReference type="GO" id="GO:0016020">
    <property type="term" value="C:membrane"/>
    <property type="evidence" value="ECO:0007669"/>
    <property type="project" value="UniProtKB-KW"/>
</dbReference>
<comment type="subcellular location">
    <subcellularLocation>
        <location evidence="2">Host membrane</location>
        <topology evidence="2">Single-pass membrane protein</topology>
    </subcellularLocation>
</comment>
<reference key="1">
    <citation type="journal article" date="1995" name="Virology">
        <title>Analysis of the complete nucleotide sequence of African swine fever virus.</title>
        <authorList>
            <person name="Yanez R.J."/>
            <person name="Rodriguez J.M."/>
            <person name="Nogal M.L."/>
            <person name="Yuste L."/>
            <person name="Enriquez C."/>
            <person name="Rodriguez J.F."/>
            <person name="Vinuela E."/>
        </authorList>
    </citation>
    <scope>NUCLEOTIDE SEQUENCE [LARGE SCALE GENOMIC DNA]</scope>
</reference>
<reference key="2">
    <citation type="journal article" date="2020" name="J. Virol.">
        <title>The African Swine Fever Virus Transcriptome.</title>
        <authorList>
            <person name="Cackett G."/>
            <person name="Matelska D."/>
            <person name="Sykora M."/>
            <person name="Portugal R."/>
            <person name="Malecki M."/>
            <person name="Baehler J."/>
            <person name="Dixon L."/>
            <person name="Werner F."/>
        </authorList>
    </citation>
    <scope>IDENTIFICATION</scope>
</reference>
<feature type="chain" id="PRO_0000454432" description="Uncharacterized membrane protein EP148R">
    <location>
        <begin position="1"/>
        <end position="148"/>
    </location>
</feature>
<feature type="transmembrane region" description="Helical" evidence="1">
    <location>
        <begin position="22"/>
        <end position="40"/>
    </location>
</feature>
<feature type="region of interest" description="Histidine-rich" evidence="2">
    <location>
        <begin position="43"/>
        <end position="141"/>
    </location>
</feature>
<sequence length="148" mass="17791">MKKIFLTMTPLPYMNHLPENHYFLSLTVVISIIHLFTTCVPQHNHSTHFPYLNHARHLNHVLHPSHARHPNHVLHLNRVLHPNRVVHLNHVLHLNHVLHLNHVLHLNHVLHPNHVLHLNPILHPNHYLVSRYYPISRHYLHKIFRLFM</sequence>
<organismHost>
    <name type="scientific">Ornithodoros</name>
    <name type="common">relapsing fever ticks</name>
    <dbReference type="NCBI Taxonomy" id="6937"/>
</organismHost>
<organismHost>
    <name type="scientific">Sus scrofa</name>
    <name type="common">Pig</name>
    <dbReference type="NCBI Taxonomy" id="9823"/>
</organismHost>